<name>NU2C_PROMP</name>
<organism>
    <name type="scientific">Prochlorococcus marinus subsp. pastoris (strain CCMP1986 / NIES-2087 / MED4)</name>
    <dbReference type="NCBI Taxonomy" id="59919"/>
    <lineage>
        <taxon>Bacteria</taxon>
        <taxon>Bacillati</taxon>
        <taxon>Cyanobacteriota</taxon>
        <taxon>Cyanophyceae</taxon>
        <taxon>Synechococcales</taxon>
        <taxon>Prochlorococcaceae</taxon>
        <taxon>Prochlorococcus</taxon>
    </lineage>
</organism>
<feature type="chain" id="PRO_0000225356" description="NAD(P)H-quinone oxidoreductase subunit 2">
    <location>
        <begin position="1"/>
        <end position="506"/>
    </location>
</feature>
<feature type="transmembrane region" description="Helical" evidence="1">
    <location>
        <begin position="14"/>
        <end position="34"/>
    </location>
</feature>
<feature type="transmembrane region" description="Helical" evidence="1">
    <location>
        <begin position="42"/>
        <end position="62"/>
    </location>
</feature>
<feature type="transmembrane region" description="Helical" evidence="1">
    <location>
        <begin position="79"/>
        <end position="99"/>
    </location>
</feature>
<feature type="transmembrane region" description="Helical" evidence="1">
    <location>
        <begin position="108"/>
        <end position="128"/>
    </location>
</feature>
<feature type="transmembrane region" description="Helical" evidence="1">
    <location>
        <begin position="132"/>
        <end position="152"/>
    </location>
</feature>
<feature type="transmembrane region" description="Helical" evidence="1">
    <location>
        <begin position="167"/>
        <end position="187"/>
    </location>
</feature>
<feature type="transmembrane region" description="Helical" evidence="1">
    <location>
        <begin position="206"/>
        <end position="226"/>
    </location>
</feature>
<feature type="transmembrane region" description="Helical" evidence="1">
    <location>
        <begin position="240"/>
        <end position="260"/>
    </location>
</feature>
<feature type="transmembrane region" description="Helical" evidence="1">
    <location>
        <begin position="276"/>
        <end position="296"/>
    </location>
</feature>
<feature type="transmembrane region" description="Helical" evidence="1">
    <location>
        <begin position="302"/>
        <end position="322"/>
    </location>
</feature>
<feature type="transmembrane region" description="Helical" evidence="1">
    <location>
        <begin position="330"/>
        <end position="350"/>
    </location>
</feature>
<feature type="transmembrane region" description="Helical" evidence="1">
    <location>
        <begin position="374"/>
        <end position="394"/>
    </location>
</feature>
<feature type="transmembrane region" description="Helical" evidence="1">
    <location>
        <begin position="409"/>
        <end position="429"/>
    </location>
</feature>
<feature type="transmembrane region" description="Helical" evidence="1">
    <location>
        <begin position="462"/>
        <end position="482"/>
    </location>
</feature>
<reference key="1">
    <citation type="journal article" date="2003" name="Nature">
        <title>Genome divergence in two Prochlorococcus ecotypes reflects oceanic niche differentiation.</title>
        <authorList>
            <person name="Rocap G."/>
            <person name="Larimer F.W."/>
            <person name="Lamerdin J.E."/>
            <person name="Malfatti S."/>
            <person name="Chain P."/>
            <person name="Ahlgren N.A."/>
            <person name="Arellano A."/>
            <person name="Coleman M."/>
            <person name="Hauser L."/>
            <person name="Hess W.R."/>
            <person name="Johnson Z.I."/>
            <person name="Land M.L."/>
            <person name="Lindell D."/>
            <person name="Post A.F."/>
            <person name="Regala W."/>
            <person name="Shah M."/>
            <person name="Shaw S.L."/>
            <person name="Steglich C."/>
            <person name="Sullivan M.B."/>
            <person name="Ting C.S."/>
            <person name="Tolonen A."/>
            <person name="Webb E.A."/>
            <person name="Zinser E.R."/>
            <person name="Chisholm S.W."/>
        </authorList>
    </citation>
    <scope>NUCLEOTIDE SEQUENCE [LARGE SCALE GENOMIC DNA]</scope>
    <source>
        <strain>CCMP1986 / NIES-2087 / MED4</strain>
    </source>
</reference>
<gene>
    <name evidence="1" type="primary">ndhB</name>
    <name type="ordered locus">PMM0435</name>
</gene>
<protein>
    <recommendedName>
        <fullName evidence="1">NAD(P)H-quinone oxidoreductase subunit 2</fullName>
        <ecNumber evidence="1">7.1.1.-</ecNumber>
    </recommendedName>
    <alternativeName>
        <fullName evidence="1">NAD(P)H dehydrogenase subunit 2</fullName>
    </alternativeName>
    <alternativeName>
        <fullName evidence="1">NADH-plastoquinone oxidoreductase subunit 2</fullName>
    </alternativeName>
    <alternativeName>
        <fullName evidence="1">NDH-1, subunit 2</fullName>
    </alternativeName>
</protein>
<proteinExistence type="inferred from homology"/>
<sequence>MPNEIFTINLNAQAIIPEAFILLGIVGTLLVDLAGEKTASRWAPVICYISLGSSLISLALQWSNPVNSAFLGSFNSDNLAIAFRSIIALSTLISLLISWRYTEQSGSPIGEFAAIVLSATLGAMLLCGSTDLVSVFISLETLSVASYCLSGYLKRDPRSSEAALKYLLVGSAAAAVYLYGSSFLYGLSGSTNLSTIGVEIINKPSFITSLSLVFVLSTVAFKIAAVPFHQWTPDVYEGSPTPVVAFLSVGSKTAGFAFAIRILSTTFSSFDEQWKLLFTILAILSMALGNIVALAQTSMKRMLAYSSIGQAGFVMIGIVSGTQDGLSSAVLYLAAYLFMNLGAFSCVILFSLRTGSDRITDYSGLYQKDPLITLGLSLCLLSLGGLPPMLGFFGKIYLFFAGWANHQYLLVVVGLITSVISIYYYISVIKMMVVKEPQEASEIVKSYPEINWNIIGLPPLRIALYTCIAVTALGGILSNPLFKLANSAVSETPFLQNILAITNNVL</sequence>
<accession>Q7V2N8</accession>
<dbReference type="EC" id="7.1.1.-" evidence="1"/>
<dbReference type="EMBL" id="BX548174">
    <property type="protein sequence ID" value="CAE18894.1"/>
    <property type="molecule type" value="Genomic_DNA"/>
</dbReference>
<dbReference type="RefSeq" id="WP_011132071.1">
    <property type="nucleotide sequence ID" value="NC_005072.1"/>
</dbReference>
<dbReference type="SMR" id="Q7V2N8"/>
<dbReference type="STRING" id="59919.PMM0435"/>
<dbReference type="KEGG" id="pmm:PMM0435"/>
<dbReference type="eggNOG" id="COG1007">
    <property type="taxonomic scope" value="Bacteria"/>
</dbReference>
<dbReference type="HOGENOM" id="CLU_007100_1_2_3"/>
<dbReference type="OrthoDB" id="9811718at2"/>
<dbReference type="Proteomes" id="UP000001026">
    <property type="component" value="Chromosome"/>
</dbReference>
<dbReference type="GO" id="GO:0031676">
    <property type="term" value="C:plasma membrane-derived thylakoid membrane"/>
    <property type="evidence" value="ECO:0007669"/>
    <property type="project" value="UniProtKB-SubCell"/>
</dbReference>
<dbReference type="GO" id="GO:0008137">
    <property type="term" value="F:NADH dehydrogenase (ubiquinone) activity"/>
    <property type="evidence" value="ECO:0007669"/>
    <property type="project" value="InterPro"/>
</dbReference>
<dbReference type="GO" id="GO:0048038">
    <property type="term" value="F:quinone binding"/>
    <property type="evidence" value="ECO:0007669"/>
    <property type="project" value="UniProtKB-KW"/>
</dbReference>
<dbReference type="GO" id="GO:0042773">
    <property type="term" value="P:ATP synthesis coupled electron transport"/>
    <property type="evidence" value="ECO:0007669"/>
    <property type="project" value="InterPro"/>
</dbReference>
<dbReference type="GO" id="GO:0019684">
    <property type="term" value="P:photosynthesis, light reaction"/>
    <property type="evidence" value="ECO:0007669"/>
    <property type="project" value="UniProtKB-UniRule"/>
</dbReference>
<dbReference type="HAMAP" id="MF_00445">
    <property type="entry name" value="NDH1_NuoN_1"/>
    <property type="match status" value="1"/>
</dbReference>
<dbReference type="InterPro" id="IPR010096">
    <property type="entry name" value="NADH-Q_OxRdtase_suN/2"/>
</dbReference>
<dbReference type="InterPro" id="IPR001750">
    <property type="entry name" value="ND/Mrp_TM"/>
</dbReference>
<dbReference type="NCBIfam" id="TIGR01770">
    <property type="entry name" value="NDH_I_N"/>
    <property type="match status" value="1"/>
</dbReference>
<dbReference type="NCBIfam" id="NF002701">
    <property type="entry name" value="PRK02504.1"/>
    <property type="match status" value="1"/>
</dbReference>
<dbReference type="PANTHER" id="PTHR22773">
    <property type="entry name" value="NADH DEHYDROGENASE"/>
    <property type="match status" value="1"/>
</dbReference>
<dbReference type="Pfam" id="PF00361">
    <property type="entry name" value="Proton_antipo_M"/>
    <property type="match status" value="1"/>
</dbReference>
<comment type="function">
    <text evidence="1">NDH-1 shuttles electrons from an unknown electron donor, via FMN and iron-sulfur (Fe-S) centers, to quinones in the respiratory and/or the photosynthetic chain. The immediate electron acceptor for the enzyme in this species is believed to be plastoquinone. Couples the redox reaction to proton translocation, and thus conserves the redox energy in a proton gradient. Cyanobacterial NDH-1 also plays a role in inorganic carbon-concentration.</text>
</comment>
<comment type="catalytic activity">
    <reaction evidence="1">
        <text>a plastoquinone + NADH + (n+1) H(+)(in) = a plastoquinol + NAD(+) + n H(+)(out)</text>
        <dbReference type="Rhea" id="RHEA:42608"/>
        <dbReference type="Rhea" id="RHEA-COMP:9561"/>
        <dbReference type="Rhea" id="RHEA-COMP:9562"/>
        <dbReference type="ChEBI" id="CHEBI:15378"/>
        <dbReference type="ChEBI" id="CHEBI:17757"/>
        <dbReference type="ChEBI" id="CHEBI:57540"/>
        <dbReference type="ChEBI" id="CHEBI:57945"/>
        <dbReference type="ChEBI" id="CHEBI:62192"/>
    </reaction>
</comment>
<comment type="catalytic activity">
    <reaction evidence="1">
        <text>a plastoquinone + NADPH + (n+1) H(+)(in) = a plastoquinol + NADP(+) + n H(+)(out)</text>
        <dbReference type="Rhea" id="RHEA:42612"/>
        <dbReference type="Rhea" id="RHEA-COMP:9561"/>
        <dbReference type="Rhea" id="RHEA-COMP:9562"/>
        <dbReference type="ChEBI" id="CHEBI:15378"/>
        <dbReference type="ChEBI" id="CHEBI:17757"/>
        <dbReference type="ChEBI" id="CHEBI:57783"/>
        <dbReference type="ChEBI" id="CHEBI:58349"/>
        <dbReference type="ChEBI" id="CHEBI:62192"/>
    </reaction>
</comment>
<comment type="subunit">
    <text evidence="1">NDH-1 can be composed of about 15 different subunits; different subcomplexes with different compositions have been identified which probably have different functions.</text>
</comment>
<comment type="subcellular location">
    <subcellularLocation>
        <location evidence="1">Cellular thylakoid membrane</location>
        <topology evidence="1">Multi-pass membrane protein</topology>
    </subcellularLocation>
</comment>
<comment type="similarity">
    <text evidence="1">Belongs to the complex I subunit 2 family.</text>
</comment>
<evidence type="ECO:0000255" key="1">
    <source>
        <dbReference type="HAMAP-Rule" id="MF_00445"/>
    </source>
</evidence>
<keyword id="KW-0472">Membrane</keyword>
<keyword id="KW-0520">NAD</keyword>
<keyword id="KW-0521">NADP</keyword>
<keyword id="KW-0618">Plastoquinone</keyword>
<keyword id="KW-0874">Quinone</keyword>
<keyword id="KW-0793">Thylakoid</keyword>
<keyword id="KW-1278">Translocase</keyword>
<keyword id="KW-0812">Transmembrane</keyword>
<keyword id="KW-1133">Transmembrane helix</keyword>
<keyword id="KW-0813">Transport</keyword>